<organism>
    <name type="scientific">Salmonella schwarzengrund (strain CVM19633)</name>
    <dbReference type="NCBI Taxonomy" id="439843"/>
    <lineage>
        <taxon>Bacteria</taxon>
        <taxon>Pseudomonadati</taxon>
        <taxon>Pseudomonadota</taxon>
        <taxon>Gammaproteobacteria</taxon>
        <taxon>Enterobacterales</taxon>
        <taxon>Enterobacteriaceae</taxon>
        <taxon>Salmonella</taxon>
    </lineage>
</organism>
<proteinExistence type="inferred from homology"/>
<evidence type="ECO:0000255" key="1">
    <source>
        <dbReference type="HAMAP-Rule" id="MF_01008"/>
    </source>
</evidence>
<evidence type="ECO:0000255" key="2">
    <source>
        <dbReference type="PROSITE-ProRule" id="PRU01076"/>
    </source>
</evidence>
<feature type="chain" id="PRO_1000191333" description="Transcriptional regulator MraZ">
    <location>
        <begin position="1"/>
        <end position="152"/>
    </location>
</feature>
<feature type="domain" description="SpoVT-AbrB 1" evidence="2">
    <location>
        <begin position="5"/>
        <end position="52"/>
    </location>
</feature>
<feature type="domain" description="SpoVT-AbrB 2" evidence="2">
    <location>
        <begin position="81"/>
        <end position="124"/>
    </location>
</feature>
<dbReference type="EMBL" id="CP001127">
    <property type="protein sequence ID" value="ACF89405.1"/>
    <property type="molecule type" value="Genomic_DNA"/>
</dbReference>
<dbReference type="RefSeq" id="WP_000488294.1">
    <property type="nucleotide sequence ID" value="NC_011094.1"/>
</dbReference>
<dbReference type="SMR" id="B4TXG9"/>
<dbReference type="KEGG" id="sew:SeSA_A0135"/>
<dbReference type="HOGENOM" id="CLU_107907_2_0_6"/>
<dbReference type="Proteomes" id="UP000001865">
    <property type="component" value="Chromosome"/>
</dbReference>
<dbReference type="GO" id="GO:0005737">
    <property type="term" value="C:cytoplasm"/>
    <property type="evidence" value="ECO:0007669"/>
    <property type="project" value="UniProtKB-UniRule"/>
</dbReference>
<dbReference type="GO" id="GO:0009295">
    <property type="term" value="C:nucleoid"/>
    <property type="evidence" value="ECO:0007669"/>
    <property type="project" value="UniProtKB-SubCell"/>
</dbReference>
<dbReference type="GO" id="GO:0003700">
    <property type="term" value="F:DNA-binding transcription factor activity"/>
    <property type="evidence" value="ECO:0007669"/>
    <property type="project" value="UniProtKB-UniRule"/>
</dbReference>
<dbReference type="GO" id="GO:0000976">
    <property type="term" value="F:transcription cis-regulatory region binding"/>
    <property type="evidence" value="ECO:0007669"/>
    <property type="project" value="TreeGrafter"/>
</dbReference>
<dbReference type="GO" id="GO:2000143">
    <property type="term" value="P:negative regulation of DNA-templated transcription initiation"/>
    <property type="evidence" value="ECO:0007669"/>
    <property type="project" value="TreeGrafter"/>
</dbReference>
<dbReference type="CDD" id="cd16321">
    <property type="entry name" value="MraZ_C"/>
    <property type="match status" value="1"/>
</dbReference>
<dbReference type="CDD" id="cd16320">
    <property type="entry name" value="MraZ_N"/>
    <property type="match status" value="1"/>
</dbReference>
<dbReference type="FunFam" id="3.40.1550.20:FF:000001">
    <property type="entry name" value="Transcriptional regulator MraZ"/>
    <property type="match status" value="1"/>
</dbReference>
<dbReference type="Gene3D" id="3.40.1550.20">
    <property type="entry name" value="Transcriptional regulator MraZ domain"/>
    <property type="match status" value="1"/>
</dbReference>
<dbReference type="HAMAP" id="MF_01008">
    <property type="entry name" value="MraZ"/>
    <property type="match status" value="1"/>
</dbReference>
<dbReference type="InterPro" id="IPR003444">
    <property type="entry name" value="MraZ"/>
</dbReference>
<dbReference type="InterPro" id="IPR035644">
    <property type="entry name" value="MraZ_C"/>
</dbReference>
<dbReference type="InterPro" id="IPR020603">
    <property type="entry name" value="MraZ_dom"/>
</dbReference>
<dbReference type="InterPro" id="IPR035642">
    <property type="entry name" value="MraZ_N"/>
</dbReference>
<dbReference type="InterPro" id="IPR038619">
    <property type="entry name" value="MraZ_sf"/>
</dbReference>
<dbReference type="InterPro" id="IPR007159">
    <property type="entry name" value="SpoVT-AbrB_dom"/>
</dbReference>
<dbReference type="InterPro" id="IPR037914">
    <property type="entry name" value="SpoVT-AbrB_sf"/>
</dbReference>
<dbReference type="NCBIfam" id="TIGR00242">
    <property type="entry name" value="division/cell wall cluster transcriptional repressor MraZ"/>
    <property type="match status" value="1"/>
</dbReference>
<dbReference type="PANTHER" id="PTHR34701">
    <property type="entry name" value="TRANSCRIPTIONAL REGULATOR MRAZ"/>
    <property type="match status" value="1"/>
</dbReference>
<dbReference type="PANTHER" id="PTHR34701:SF1">
    <property type="entry name" value="TRANSCRIPTIONAL REGULATOR MRAZ"/>
    <property type="match status" value="1"/>
</dbReference>
<dbReference type="Pfam" id="PF02381">
    <property type="entry name" value="MraZ"/>
    <property type="match status" value="2"/>
</dbReference>
<dbReference type="SUPFAM" id="SSF89447">
    <property type="entry name" value="AbrB/MazE/MraZ-like"/>
    <property type="match status" value="1"/>
</dbReference>
<dbReference type="PROSITE" id="PS51740">
    <property type="entry name" value="SPOVT_ABRB"/>
    <property type="match status" value="2"/>
</dbReference>
<sequence>MFRGATLVNLDSKGRLTVPTRYREQLIESATGQMVCTIDIHHPCLLLYPLPEWEIIEQKLSRLSSMNPVERRVQRLLLGHASECQMDGAGRLLIAPVLRQHAGLTKEVMLVGQFNKFELWDETTWYQQVKEDIDAEQSATETLSERLQDLSL</sequence>
<keyword id="KW-0963">Cytoplasm</keyword>
<keyword id="KW-0238">DNA-binding</keyword>
<keyword id="KW-0677">Repeat</keyword>
<keyword id="KW-0678">Repressor</keyword>
<keyword id="KW-0804">Transcription</keyword>
<keyword id="KW-0805">Transcription regulation</keyword>
<protein>
    <recommendedName>
        <fullName>Transcriptional regulator MraZ</fullName>
    </recommendedName>
</protein>
<name>MRAZ_SALSV</name>
<gene>
    <name evidence="1" type="primary">mraZ</name>
    <name type="ordered locus">SeSA_A0135</name>
</gene>
<reference key="1">
    <citation type="journal article" date="2011" name="J. Bacteriol.">
        <title>Comparative genomics of 28 Salmonella enterica isolates: evidence for CRISPR-mediated adaptive sublineage evolution.</title>
        <authorList>
            <person name="Fricke W.F."/>
            <person name="Mammel M.K."/>
            <person name="McDermott P.F."/>
            <person name="Tartera C."/>
            <person name="White D.G."/>
            <person name="Leclerc J.E."/>
            <person name="Ravel J."/>
            <person name="Cebula T.A."/>
        </authorList>
    </citation>
    <scope>NUCLEOTIDE SEQUENCE [LARGE SCALE GENOMIC DNA]</scope>
    <source>
        <strain>CVM19633</strain>
    </source>
</reference>
<comment type="function">
    <text evidence="1">Negatively regulates its own expression and that of the subsequent genes in the proximal part of the division and cell wall (dcw) gene cluster. Acts by binding directly to DNA. May also regulate the expression of genes outside the dcw cluster.</text>
</comment>
<comment type="subunit">
    <text evidence="1">Forms oligomers.</text>
</comment>
<comment type="subcellular location">
    <subcellularLocation>
        <location evidence="1">Cytoplasm</location>
        <location evidence="1">Nucleoid</location>
    </subcellularLocation>
</comment>
<comment type="similarity">
    <text evidence="1">Belongs to the MraZ family.</text>
</comment>
<accession>B4TXG9</accession>